<evidence type="ECO:0000255" key="1"/>
<evidence type="ECO:0000255" key="2">
    <source>
        <dbReference type="PROSITE-ProRule" id="PRU00581"/>
    </source>
</evidence>
<evidence type="ECO:0000256" key="3">
    <source>
        <dbReference type="SAM" id="MobiDB-lite"/>
    </source>
</evidence>
<evidence type="ECO:0000269" key="4">
    <source>
    </source>
</evidence>
<evidence type="ECO:0000303" key="5">
    <source>
    </source>
</evidence>
<evidence type="ECO:0000305" key="6"/>
<comment type="interaction">
    <interactant intactId="EBI-2339374">
        <id>Q8TAZ6</id>
    </interactant>
    <interactant intactId="EBI-2808844">
        <id>Q8N6S5</id>
        <label>ARL6IP6</label>
    </interactant>
    <organismsDiffer>false</organismsDiffer>
    <experiments>3</experiments>
</comment>
<comment type="interaction">
    <interactant intactId="EBI-2339374">
        <id>Q8TAZ6</id>
    </interactant>
    <interactant intactId="EBI-12011352">
        <id>Q6IBD0</id>
        <label>CDW52</label>
    </interactant>
    <organismsDiffer>false</organismsDiffer>
    <experiments>3</experiments>
</comment>
<comment type="interaction">
    <interactant intactId="EBI-2339374">
        <id>Q8TAZ6</id>
    </interactant>
    <interactant intactId="EBI-8646596">
        <id>P49447</id>
        <label>CYB561</label>
    </interactant>
    <organismsDiffer>false</organismsDiffer>
    <experiments>3</experiments>
</comment>
<comment type="interaction">
    <interactant intactId="EBI-2339374">
        <id>Q8TAZ6</id>
    </interactant>
    <interactant intactId="EBI-17856026">
        <id>Q6P0A1</id>
        <label>FAM180B</label>
    </interactant>
    <organismsDiffer>false</organismsDiffer>
    <experiments>3</experiments>
</comment>
<comment type="interaction">
    <interactant intactId="EBI-2339374">
        <id>Q8TAZ6</id>
    </interactant>
    <interactant intactId="EBI-3867271">
        <id>Q9NQG1</id>
        <label>MANBAL</label>
    </interactant>
    <organismsDiffer>false</organismsDiffer>
    <experiments>3</experiments>
</comment>
<comment type="interaction">
    <interactant intactId="EBI-2339374">
        <id>Q8TAZ6</id>
    </interactant>
    <interactant intactId="EBI-9550165">
        <id>Q0D2K0</id>
        <label>NIPAL4</label>
    </interactant>
    <organismsDiffer>false</organismsDiffer>
    <experiments>3</experiments>
</comment>
<comment type="interaction">
    <interactant intactId="EBI-2339374">
        <id>Q8TAZ6</id>
    </interactant>
    <interactant intactId="EBI-4289564">
        <id>P30825</id>
        <label>SLC7A1</label>
    </interactant>
    <organismsDiffer>false</organismsDiffer>
    <experiments>3</experiments>
</comment>
<comment type="interaction">
    <interactant intactId="EBI-2339374">
        <id>Q8TAZ6</id>
    </interactant>
    <interactant intactId="EBI-12200293">
        <id>P0DN84</id>
        <label>STRIT1</label>
    </interactant>
    <organismsDiffer>false</organismsDiffer>
    <experiments>3</experiments>
</comment>
<comment type="interaction">
    <interactant intactId="EBI-2339374">
        <id>Q8TAZ6</id>
    </interactant>
    <interactant intactId="EBI-6268651">
        <id>Q9NPL8</id>
        <label>TIMMDC1</label>
    </interactant>
    <organismsDiffer>false</organismsDiffer>
    <experiments>3</experiments>
</comment>
<comment type="interaction">
    <interactant intactId="EBI-2339374">
        <id>Q8TAZ6</id>
    </interactant>
    <interactant intactId="EBI-8650934">
        <id>P48230</id>
        <label>TM4SF4</label>
    </interactant>
    <organismsDiffer>false</organismsDiffer>
    <experiments>3</experiments>
</comment>
<comment type="interaction">
    <interactant intactId="EBI-2339374">
        <id>Q8TAZ6</id>
    </interactant>
    <interactant intactId="EBI-7850136">
        <id>Q9Y548</id>
        <label>YIPF1</label>
    </interactant>
    <organismsDiffer>false</organismsDiffer>
    <experiments>3</experiments>
</comment>
<comment type="subcellular location">
    <subcellularLocation>
        <location>Membrane</location>
        <topology>Multi-pass membrane protein</topology>
    </subcellularLocation>
</comment>
<comment type="alternative products">
    <event type="alternative splicing"/>
    <isoform>
        <id>Q8TAZ6-1</id>
        <name>1</name>
        <sequence type="displayed"/>
    </isoform>
    <isoform>
        <id>Q8TAZ6-2</id>
        <name>2</name>
        <sequence type="described" ref="VSP_047061"/>
    </isoform>
</comment>
<comment type="tissue specificity">
    <text evidence="4">Highly expressed in testis.</text>
</comment>
<comment type="similarity">
    <text evidence="6">Belongs to the chemokine-like factor family.</text>
</comment>
<reference key="1">
    <citation type="journal article" date="2003" name="Genomics">
        <title>Identification of eight genes encoding chemokine-like factor superfamily members 1-8 (CKLFSF1-8) by in silico cloning and experimental validation.</title>
        <authorList>
            <person name="Han W."/>
            <person name="Ding P."/>
            <person name="Xu M."/>
            <person name="Wang L."/>
            <person name="Rui M."/>
            <person name="Shi S."/>
            <person name="Liu Y."/>
            <person name="Zheng Y."/>
            <person name="Chen Y."/>
            <person name="Yang T."/>
            <person name="Ma D."/>
        </authorList>
    </citation>
    <scope>NUCLEOTIDE SEQUENCE [MRNA] (ISOFORM 1)</scope>
    <scope>TISSUE SPECIFICITY</scope>
    <source>
        <tissue>Testis</tissue>
    </source>
</reference>
<reference key="2">
    <citation type="journal article" date="2005" name="Int. J. Biochem. Cell Biol.">
        <title>CKLFSF2 is highly expressed in testis and can be secreted into the seminiferous tubules.</title>
        <authorList>
            <person name="Shi S."/>
            <person name="Rui M."/>
            <person name="Han W."/>
            <person name="Wang Y."/>
            <person name="Qiu X."/>
            <person name="Ding P."/>
            <person name="Zhang P."/>
            <person name="Zhu X."/>
            <person name="Zhang Y."/>
            <person name="Gan Q."/>
            <person name="Ma D."/>
        </authorList>
    </citation>
    <scope>NUCLEOTIDE SEQUENCE [MRNA] (ISOFORM 2)</scope>
</reference>
<reference key="3">
    <citation type="journal article" date="2004" name="Nat. Genet.">
        <title>Complete sequencing and characterization of 21,243 full-length human cDNAs.</title>
        <authorList>
            <person name="Ota T."/>
            <person name="Suzuki Y."/>
            <person name="Nishikawa T."/>
            <person name="Otsuki T."/>
            <person name="Sugiyama T."/>
            <person name="Irie R."/>
            <person name="Wakamatsu A."/>
            <person name="Hayashi K."/>
            <person name="Sato H."/>
            <person name="Nagai K."/>
            <person name="Kimura K."/>
            <person name="Makita H."/>
            <person name="Sekine M."/>
            <person name="Obayashi M."/>
            <person name="Nishi T."/>
            <person name="Shibahara T."/>
            <person name="Tanaka T."/>
            <person name="Ishii S."/>
            <person name="Yamamoto J."/>
            <person name="Saito K."/>
            <person name="Kawai Y."/>
            <person name="Isono Y."/>
            <person name="Nakamura Y."/>
            <person name="Nagahari K."/>
            <person name="Murakami K."/>
            <person name="Yasuda T."/>
            <person name="Iwayanagi T."/>
            <person name="Wagatsuma M."/>
            <person name="Shiratori A."/>
            <person name="Sudo H."/>
            <person name="Hosoiri T."/>
            <person name="Kaku Y."/>
            <person name="Kodaira H."/>
            <person name="Kondo H."/>
            <person name="Sugawara M."/>
            <person name="Takahashi M."/>
            <person name="Kanda K."/>
            <person name="Yokoi T."/>
            <person name="Furuya T."/>
            <person name="Kikkawa E."/>
            <person name="Omura Y."/>
            <person name="Abe K."/>
            <person name="Kamihara K."/>
            <person name="Katsuta N."/>
            <person name="Sato K."/>
            <person name="Tanikawa M."/>
            <person name="Yamazaki M."/>
            <person name="Ninomiya K."/>
            <person name="Ishibashi T."/>
            <person name="Yamashita H."/>
            <person name="Murakawa K."/>
            <person name="Fujimori K."/>
            <person name="Tanai H."/>
            <person name="Kimata M."/>
            <person name="Watanabe M."/>
            <person name="Hiraoka S."/>
            <person name="Chiba Y."/>
            <person name="Ishida S."/>
            <person name="Ono Y."/>
            <person name="Takiguchi S."/>
            <person name="Watanabe S."/>
            <person name="Yosida M."/>
            <person name="Hotuta T."/>
            <person name="Kusano J."/>
            <person name="Kanehori K."/>
            <person name="Takahashi-Fujii A."/>
            <person name="Hara H."/>
            <person name="Tanase T.-O."/>
            <person name="Nomura Y."/>
            <person name="Togiya S."/>
            <person name="Komai F."/>
            <person name="Hara R."/>
            <person name="Takeuchi K."/>
            <person name="Arita M."/>
            <person name="Imose N."/>
            <person name="Musashino K."/>
            <person name="Yuuki H."/>
            <person name="Oshima A."/>
            <person name="Sasaki N."/>
            <person name="Aotsuka S."/>
            <person name="Yoshikawa Y."/>
            <person name="Matsunawa H."/>
            <person name="Ichihara T."/>
            <person name="Shiohata N."/>
            <person name="Sano S."/>
            <person name="Moriya S."/>
            <person name="Momiyama H."/>
            <person name="Satoh N."/>
            <person name="Takami S."/>
            <person name="Terashima Y."/>
            <person name="Suzuki O."/>
            <person name="Nakagawa S."/>
            <person name="Senoh A."/>
            <person name="Mizoguchi H."/>
            <person name="Goto Y."/>
            <person name="Shimizu F."/>
            <person name="Wakebe H."/>
            <person name="Hishigaki H."/>
            <person name="Watanabe T."/>
            <person name="Sugiyama A."/>
            <person name="Takemoto M."/>
            <person name="Kawakami B."/>
            <person name="Yamazaki M."/>
            <person name="Watanabe K."/>
            <person name="Kumagai A."/>
            <person name="Itakura S."/>
            <person name="Fukuzumi Y."/>
            <person name="Fujimori Y."/>
            <person name="Komiyama M."/>
            <person name="Tashiro H."/>
            <person name="Tanigami A."/>
            <person name="Fujiwara T."/>
            <person name="Ono T."/>
            <person name="Yamada K."/>
            <person name="Fujii Y."/>
            <person name="Ozaki K."/>
            <person name="Hirao M."/>
            <person name="Ohmori Y."/>
            <person name="Kawabata A."/>
            <person name="Hikiji T."/>
            <person name="Kobatake N."/>
            <person name="Inagaki H."/>
            <person name="Ikema Y."/>
            <person name="Okamoto S."/>
            <person name="Okitani R."/>
            <person name="Kawakami T."/>
            <person name="Noguchi S."/>
            <person name="Itoh T."/>
            <person name="Shigeta K."/>
            <person name="Senba T."/>
            <person name="Matsumura K."/>
            <person name="Nakajima Y."/>
            <person name="Mizuno T."/>
            <person name="Morinaga M."/>
            <person name="Sasaki M."/>
            <person name="Togashi T."/>
            <person name="Oyama M."/>
            <person name="Hata H."/>
            <person name="Watanabe M."/>
            <person name="Komatsu T."/>
            <person name="Mizushima-Sugano J."/>
            <person name="Satoh T."/>
            <person name="Shirai Y."/>
            <person name="Takahashi Y."/>
            <person name="Nakagawa K."/>
            <person name="Okumura K."/>
            <person name="Nagase T."/>
            <person name="Nomura N."/>
            <person name="Kikuchi H."/>
            <person name="Masuho Y."/>
            <person name="Yamashita R."/>
            <person name="Nakai K."/>
            <person name="Yada T."/>
            <person name="Nakamura Y."/>
            <person name="Ohara O."/>
            <person name="Isogai T."/>
            <person name="Sugano S."/>
        </authorList>
    </citation>
    <scope>NUCLEOTIDE SEQUENCE [LARGE SCALE MRNA] (ISOFORM 1)</scope>
    <source>
        <tissue>Testis</tissue>
    </source>
</reference>
<reference key="4">
    <citation type="journal article" date="2004" name="Nature">
        <title>The sequence and analysis of duplication-rich human chromosome 16.</title>
        <authorList>
            <person name="Martin J."/>
            <person name="Han C."/>
            <person name="Gordon L.A."/>
            <person name="Terry A."/>
            <person name="Prabhakar S."/>
            <person name="She X."/>
            <person name="Xie G."/>
            <person name="Hellsten U."/>
            <person name="Chan Y.M."/>
            <person name="Altherr M."/>
            <person name="Couronne O."/>
            <person name="Aerts A."/>
            <person name="Bajorek E."/>
            <person name="Black S."/>
            <person name="Blumer H."/>
            <person name="Branscomb E."/>
            <person name="Brown N.C."/>
            <person name="Bruno W.J."/>
            <person name="Buckingham J.M."/>
            <person name="Callen D.F."/>
            <person name="Campbell C.S."/>
            <person name="Campbell M.L."/>
            <person name="Campbell E.W."/>
            <person name="Caoile C."/>
            <person name="Challacombe J.F."/>
            <person name="Chasteen L.A."/>
            <person name="Chertkov O."/>
            <person name="Chi H.C."/>
            <person name="Christensen M."/>
            <person name="Clark L.M."/>
            <person name="Cohn J.D."/>
            <person name="Denys M."/>
            <person name="Detter J.C."/>
            <person name="Dickson M."/>
            <person name="Dimitrijevic-Bussod M."/>
            <person name="Escobar J."/>
            <person name="Fawcett J.J."/>
            <person name="Flowers D."/>
            <person name="Fotopulos D."/>
            <person name="Glavina T."/>
            <person name="Gomez M."/>
            <person name="Gonzales E."/>
            <person name="Goodstein D."/>
            <person name="Goodwin L.A."/>
            <person name="Grady D.L."/>
            <person name="Grigoriev I."/>
            <person name="Groza M."/>
            <person name="Hammon N."/>
            <person name="Hawkins T."/>
            <person name="Haydu L."/>
            <person name="Hildebrand C.E."/>
            <person name="Huang W."/>
            <person name="Israni S."/>
            <person name="Jett J."/>
            <person name="Jewett P.B."/>
            <person name="Kadner K."/>
            <person name="Kimball H."/>
            <person name="Kobayashi A."/>
            <person name="Krawczyk M.-C."/>
            <person name="Leyba T."/>
            <person name="Longmire J.L."/>
            <person name="Lopez F."/>
            <person name="Lou Y."/>
            <person name="Lowry S."/>
            <person name="Ludeman T."/>
            <person name="Manohar C.F."/>
            <person name="Mark G.A."/>
            <person name="McMurray K.L."/>
            <person name="Meincke L.J."/>
            <person name="Morgan J."/>
            <person name="Moyzis R.K."/>
            <person name="Mundt M.O."/>
            <person name="Munk A.C."/>
            <person name="Nandkeshwar R.D."/>
            <person name="Pitluck S."/>
            <person name="Pollard M."/>
            <person name="Predki P."/>
            <person name="Parson-Quintana B."/>
            <person name="Ramirez L."/>
            <person name="Rash S."/>
            <person name="Retterer J."/>
            <person name="Ricke D.O."/>
            <person name="Robinson D.L."/>
            <person name="Rodriguez A."/>
            <person name="Salamov A."/>
            <person name="Saunders E.H."/>
            <person name="Scott D."/>
            <person name="Shough T."/>
            <person name="Stallings R.L."/>
            <person name="Stalvey M."/>
            <person name="Sutherland R.D."/>
            <person name="Tapia R."/>
            <person name="Tesmer J.G."/>
            <person name="Thayer N."/>
            <person name="Thompson L.S."/>
            <person name="Tice H."/>
            <person name="Torney D.C."/>
            <person name="Tran-Gyamfi M."/>
            <person name="Tsai M."/>
            <person name="Ulanovsky L.E."/>
            <person name="Ustaszewska A."/>
            <person name="Vo N."/>
            <person name="White P.S."/>
            <person name="Williams A.L."/>
            <person name="Wills P.L."/>
            <person name="Wu J.-R."/>
            <person name="Wu K."/>
            <person name="Yang J."/>
            <person name="DeJong P."/>
            <person name="Bruce D."/>
            <person name="Doggett N.A."/>
            <person name="Deaven L."/>
            <person name="Schmutz J."/>
            <person name="Grimwood J."/>
            <person name="Richardson P."/>
            <person name="Rokhsar D.S."/>
            <person name="Eichler E.E."/>
            <person name="Gilna P."/>
            <person name="Lucas S.M."/>
            <person name="Myers R.M."/>
            <person name="Rubin E.M."/>
            <person name="Pennacchio L.A."/>
        </authorList>
    </citation>
    <scope>NUCLEOTIDE SEQUENCE [LARGE SCALE GENOMIC DNA]</scope>
</reference>
<reference key="5">
    <citation type="journal article" date="2004" name="Genome Res.">
        <title>The status, quality, and expansion of the NIH full-length cDNA project: the Mammalian Gene Collection (MGC).</title>
        <authorList>
            <consortium name="The MGC Project Team"/>
        </authorList>
    </citation>
    <scope>NUCLEOTIDE SEQUENCE [LARGE SCALE MRNA] (ISOFORM 1)</scope>
    <source>
        <tissue>Muscle</tissue>
    </source>
</reference>
<accession>Q8TAZ6</accession>
<accession>Q5I2A4</accession>
<accession>Q8N7E5</accession>
<name>CKLF2_HUMAN</name>
<protein>
    <recommendedName>
        <fullName>CKLF-like MARVEL transmembrane domain-containing protein 2</fullName>
    </recommendedName>
    <alternativeName>
        <fullName>Chemokine-like factor superfamily member 2</fullName>
    </alternativeName>
</protein>
<gene>
    <name type="primary">CMTM2</name>
    <name type="synonym">CKLFSF2</name>
</gene>
<keyword id="KW-0025">Alternative splicing</keyword>
<keyword id="KW-0145">Chemotaxis</keyword>
<keyword id="KW-0202">Cytokine</keyword>
<keyword id="KW-0472">Membrane</keyword>
<keyword id="KW-1267">Proteomics identification</keyword>
<keyword id="KW-1185">Reference proteome</keyword>
<keyword id="KW-0812">Transmembrane</keyword>
<keyword id="KW-1133">Transmembrane helix</keyword>
<proteinExistence type="evidence at protein level"/>
<organism>
    <name type="scientific">Homo sapiens</name>
    <name type="common">Human</name>
    <dbReference type="NCBI Taxonomy" id="9606"/>
    <lineage>
        <taxon>Eukaryota</taxon>
        <taxon>Metazoa</taxon>
        <taxon>Chordata</taxon>
        <taxon>Craniata</taxon>
        <taxon>Vertebrata</taxon>
        <taxon>Euteleostomi</taxon>
        <taxon>Mammalia</taxon>
        <taxon>Eutheria</taxon>
        <taxon>Euarchontoglires</taxon>
        <taxon>Primates</taxon>
        <taxon>Haplorrhini</taxon>
        <taxon>Catarrhini</taxon>
        <taxon>Hominidae</taxon>
        <taxon>Homo</taxon>
    </lineage>
</organism>
<sequence length="248" mass="27496">MAPKAAKGAKPEPAPAPPPPGAKPEEDKKDGKEPSDKPQKAVQDHKEPSDKPQKAVQPKHEVGTRRGCRRYRWELKDSNKEFWLLGHAEIKIRSLGCLIAAMILLSSLTVHPILRLIITMEISFFSFFILLYSFAIHRYIPFILWPISDLFNDLIACAFLVGAVVFAVRSRRSMNLHYLLAVILIGAAGVFAFIDVCLQRNHFRGKKAKKHMLVPPPGKEKGPQQGKGPEPAKPPEPGKPPGPAKGKK</sequence>
<feature type="chain" id="PRO_0000186098" description="CKLF-like MARVEL transmembrane domain-containing protein 2">
    <location>
        <begin position="1"/>
        <end position="248"/>
    </location>
</feature>
<feature type="transmembrane region" description="Helical" evidence="1">
    <location>
        <begin position="116"/>
        <end position="136"/>
    </location>
</feature>
<feature type="transmembrane region" description="Helical" evidence="1">
    <location>
        <begin position="147"/>
        <end position="167"/>
    </location>
</feature>
<feature type="transmembrane region" description="Helical" evidence="1">
    <location>
        <begin position="178"/>
        <end position="198"/>
    </location>
</feature>
<feature type="domain" description="MARVEL" evidence="2">
    <location>
        <begin position="82"/>
        <end position="204"/>
    </location>
</feature>
<feature type="region of interest" description="Disordered" evidence="3">
    <location>
        <begin position="1"/>
        <end position="63"/>
    </location>
</feature>
<feature type="region of interest" description="Disordered" evidence="3">
    <location>
        <begin position="208"/>
        <end position="248"/>
    </location>
</feature>
<feature type="compositionally biased region" description="Pro residues" evidence="3">
    <location>
        <begin position="12"/>
        <end position="22"/>
    </location>
</feature>
<feature type="compositionally biased region" description="Basic and acidic residues" evidence="3">
    <location>
        <begin position="23"/>
        <end position="63"/>
    </location>
</feature>
<feature type="compositionally biased region" description="Pro residues" evidence="3">
    <location>
        <begin position="231"/>
        <end position="248"/>
    </location>
</feature>
<feature type="splice variant" id="VSP_047061" description="In isoform 2." evidence="5">
    <location>
        <begin position="96"/>
        <end position="148"/>
    </location>
</feature>
<feature type="sequence variant" id="VAR_022154" description="In dbSNP:rs2290182.">
    <original>I</original>
    <variation>T</variation>
    <location>
        <position position="122"/>
    </location>
</feature>
<feature type="sequence conflict" description="In Ref. 2; BAC05345." evidence="6" ref="2">
    <original>R</original>
    <variation>Q</variation>
    <location>
        <position position="172"/>
    </location>
</feature>
<dbReference type="EMBL" id="AF479260">
    <property type="protein sequence ID" value="AAN73038.1"/>
    <property type="molecule type" value="mRNA"/>
</dbReference>
<dbReference type="EMBL" id="AY862139">
    <property type="protein sequence ID" value="AAW51946.1"/>
    <property type="molecule type" value="mRNA"/>
</dbReference>
<dbReference type="EMBL" id="AK098598">
    <property type="protein sequence ID" value="BAC05345.1"/>
    <property type="molecule type" value="mRNA"/>
</dbReference>
<dbReference type="EMBL" id="AC010542">
    <property type="status" value="NOT_ANNOTATED_CDS"/>
    <property type="molecule type" value="Genomic_DNA"/>
</dbReference>
<dbReference type="EMBL" id="BC025354">
    <property type="protein sequence ID" value="AAH25354.1"/>
    <property type="molecule type" value="mRNA"/>
</dbReference>
<dbReference type="CCDS" id="CCDS10814.1">
    <molecule id="Q8TAZ6-1"/>
</dbReference>
<dbReference type="CCDS" id="CCDS56001.1">
    <molecule id="Q8TAZ6-2"/>
</dbReference>
<dbReference type="RefSeq" id="NP_001186246.1">
    <molecule id="Q8TAZ6-2"/>
    <property type="nucleotide sequence ID" value="NM_001199317.2"/>
</dbReference>
<dbReference type="RefSeq" id="NP_653274.1">
    <molecule id="Q8TAZ6-1"/>
    <property type="nucleotide sequence ID" value="NM_144673.3"/>
</dbReference>
<dbReference type="BioGRID" id="126973">
    <property type="interactions" value="29"/>
</dbReference>
<dbReference type="FunCoup" id="Q8TAZ6">
    <property type="interactions" value="6"/>
</dbReference>
<dbReference type="IntAct" id="Q8TAZ6">
    <property type="interactions" value="16"/>
</dbReference>
<dbReference type="STRING" id="9606.ENSP00000268595"/>
<dbReference type="iPTMnet" id="Q8TAZ6"/>
<dbReference type="PhosphoSitePlus" id="Q8TAZ6"/>
<dbReference type="BioMuta" id="CMTM2"/>
<dbReference type="DMDM" id="34921873"/>
<dbReference type="MassIVE" id="Q8TAZ6"/>
<dbReference type="PaxDb" id="9606-ENSP00000268595"/>
<dbReference type="PeptideAtlas" id="Q8TAZ6"/>
<dbReference type="Antibodypedia" id="3086">
    <property type="antibodies" value="148 antibodies from 26 providers"/>
</dbReference>
<dbReference type="DNASU" id="146225"/>
<dbReference type="Ensembl" id="ENST00000268595.3">
    <molecule id="Q8TAZ6-1"/>
    <property type="protein sequence ID" value="ENSP00000268595.2"/>
    <property type="gene ID" value="ENSG00000140932.10"/>
</dbReference>
<dbReference type="Ensembl" id="ENST00000379486.6">
    <molecule id="Q8TAZ6-2"/>
    <property type="protein sequence ID" value="ENSP00000368800.2"/>
    <property type="gene ID" value="ENSG00000140932.10"/>
</dbReference>
<dbReference type="GeneID" id="146225"/>
<dbReference type="KEGG" id="hsa:146225"/>
<dbReference type="MANE-Select" id="ENST00000268595.3">
    <property type="protein sequence ID" value="ENSP00000268595.2"/>
    <property type="RefSeq nucleotide sequence ID" value="NM_144673.3"/>
    <property type="RefSeq protein sequence ID" value="NP_653274.1"/>
</dbReference>
<dbReference type="UCSC" id="uc002ept.4">
    <molecule id="Q8TAZ6-1"/>
    <property type="organism name" value="human"/>
</dbReference>
<dbReference type="AGR" id="HGNC:19173"/>
<dbReference type="CTD" id="146225"/>
<dbReference type="DisGeNET" id="146225"/>
<dbReference type="GeneCards" id="CMTM2"/>
<dbReference type="HGNC" id="HGNC:19173">
    <property type="gene designation" value="CMTM2"/>
</dbReference>
<dbReference type="HPA" id="ENSG00000140932">
    <property type="expression patterns" value="Tissue enriched (testis)"/>
</dbReference>
<dbReference type="MIM" id="607885">
    <property type="type" value="gene"/>
</dbReference>
<dbReference type="neXtProt" id="NX_Q8TAZ6"/>
<dbReference type="OpenTargets" id="ENSG00000140932"/>
<dbReference type="PharmGKB" id="PA38812"/>
<dbReference type="VEuPathDB" id="HostDB:ENSG00000140932"/>
<dbReference type="eggNOG" id="KOG4788">
    <property type="taxonomic scope" value="Eukaryota"/>
</dbReference>
<dbReference type="GeneTree" id="ENSGT00390000005715"/>
<dbReference type="HOGENOM" id="CLU_106771_0_0_1"/>
<dbReference type="InParanoid" id="Q8TAZ6"/>
<dbReference type="OMA" id="FAIHRYI"/>
<dbReference type="OrthoDB" id="9634153at2759"/>
<dbReference type="PAN-GO" id="Q8TAZ6">
    <property type="GO annotations" value="1 GO annotation based on evolutionary models"/>
</dbReference>
<dbReference type="PhylomeDB" id="Q8TAZ6"/>
<dbReference type="TreeFam" id="TF338711"/>
<dbReference type="PathwayCommons" id="Q8TAZ6"/>
<dbReference type="SignaLink" id="Q8TAZ6"/>
<dbReference type="BioGRID-ORCS" id="146225">
    <property type="hits" value="12 hits in 1145 CRISPR screens"/>
</dbReference>
<dbReference type="GeneWiki" id="CMTM2"/>
<dbReference type="GenomeRNAi" id="146225"/>
<dbReference type="Pharos" id="Q8TAZ6">
    <property type="development level" value="Tbio"/>
</dbReference>
<dbReference type="PRO" id="PR:Q8TAZ6"/>
<dbReference type="Proteomes" id="UP000005640">
    <property type="component" value="Chromosome 16"/>
</dbReference>
<dbReference type="RNAct" id="Q8TAZ6">
    <property type="molecule type" value="protein"/>
</dbReference>
<dbReference type="Bgee" id="ENSG00000140932">
    <property type="expression patterns" value="Expressed in sperm and 103 other cell types or tissues"/>
</dbReference>
<dbReference type="ExpressionAtlas" id="Q8TAZ6">
    <property type="expression patterns" value="baseline and differential"/>
</dbReference>
<dbReference type="GO" id="GO:0005615">
    <property type="term" value="C:extracellular space"/>
    <property type="evidence" value="ECO:0007669"/>
    <property type="project" value="UniProtKB-KW"/>
</dbReference>
<dbReference type="GO" id="GO:0016020">
    <property type="term" value="C:membrane"/>
    <property type="evidence" value="ECO:0000318"/>
    <property type="project" value="GO_Central"/>
</dbReference>
<dbReference type="GO" id="GO:0005125">
    <property type="term" value="F:cytokine activity"/>
    <property type="evidence" value="ECO:0007669"/>
    <property type="project" value="UniProtKB-KW"/>
</dbReference>
<dbReference type="GO" id="GO:0006935">
    <property type="term" value="P:chemotaxis"/>
    <property type="evidence" value="ECO:0007669"/>
    <property type="project" value="UniProtKB-KW"/>
</dbReference>
<dbReference type="InterPro" id="IPR008253">
    <property type="entry name" value="Marvel"/>
</dbReference>
<dbReference type="InterPro" id="IPR050578">
    <property type="entry name" value="MARVEL-CKLF_proteins"/>
</dbReference>
<dbReference type="PANTHER" id="PTHR22776:SF15">
    <property type="entry name" value="CKLF-LIKE MARVEL TRANSMEMBRANE DOMAIN-CONTAINING PROTEIN 2"/>
    <property type="match status" value="1"/>
</dbReference>
<dbReference type="PANTHER" id="PTHR22776">
    <property type="entry name" value="MARVEL-CONTAINING POTENTIAL LIPID RAFT-ASSOCIATED PROTEIN"/>
    <property type="match status" value="1"/>
</dbReference>
<dbReference type="PROSITE" id="PS51225">
    <property type="entry name" value="MARVEL"/>
    <property type="match status" value="1"/>
</dbReference>